<comment type="function">
    <text evidence="1">Heavy-metal-binding protein.</text>
</comment>
<comment type="similarity">
    <text evidence="7">Belongs to the HIPP family.</text>
</comment>
<accession>Q9M8T7</accession>
<name>HIP8_ARATH</name>
<feature type="chain" id="PRO_0000437805" description="Heavy metal-associated isoprenylated plant protein 8">
    <location>
        <begin position="1"/>
        <end position="243"/>
    </location>
</feature>
<feature type="propeptide" id="PRO_0000437806" description="Removed in mature form" evidence="7">
    <location>
        <begin position="244"/>
        <end position="246"/>
    </location>
</feature>
<feature type="domain" description="HMA 1" evidence="3">
    <location>
        <begin position="35"/>
        <end position="99"/>
    </location>
</feature>
<feature type="domain" description="HMA 2" evidence="3">
    <location>
        <begin position="125"/>
        <end position="189"/>
    </location>
</feature>
<feature type="region of interest" description="Disordered" evidence="4">
    <location>
        <begin position="1"/>
        <end position="31"/>
    </location>
</feature>
<feature type="region of interest" description="Disordered" evidence="4">
    <location>
        <begin position="96"/>
        <end position="122"/>
    </location>
</feature>
<feature type="region of interest" description="Disordered" evidence="4">
    <location>
        <begin position="191"/>
        <end position="226"/>
    </location>
</feature>
<feature type="compositionally biased region" description="Basic and acidic residues" evidence="4">
    <location>
        <begin position="108"/>
        <end position="122"/>
    </location>
</feature>
<feature type="compositionally biased region" description="Basic and acidic residues" evidence="4">
    <location>
        <begin position="196"/>
        <end position="214"/>
    </location>
</feature>
<feature type="binding site" evidence="3">
    <location>
        <position position="46"/>
    </location>
    <ligand>
        <name>a metal cation</name>
        <dbReference type="ChEBI" id="CHEBI:25213"/>
        <label>1</label>
    </ligand>
</feature>
<feature type="binding site" evidence="3">
    <location>
        <position position="49"/>
    </location>
    <ligand>
        <name>a metal cation</name>
        <dbReference type="ChEBI" id="CHEBI:25213"/>
        <label>1</label>
    </ligand>
</feature>
<feature type="binding site" evidence="3">
    <location>
        <position position="136"/>
    </location>
    <ligand>
        <name>a metal cation</name>
        <dbReference type="ChEBI" id="CHEBI:25213"/>
        <label>2</label>
    </ligand>
</feature>
<feature type="binding site" evidence="3">
    <location>
        <position position="139"/>
    </location>
    <ligand>
        <name>a metal cation</name>
        <dbReference type="ChEBI" id="CHEBI:25213"/>
        <label>2</label>
    </ligand>
</feature>
<feature type="modified residue" description="Cysteine methyl ester" evidence="2">
    <location>
        <position position="243"/>
    </location>
</feature>
<feature type="lipid moiety-binding region" description="S-farnesyl cysteine" evidence="2">
    <location>
        <position position="243"/>
    </location>
</feature>
<reference key="1">
    <citation type="journal article" date="2000" name="Nature">
        <title>Sequence and analysis of chromosome 3 of the plant Arabidopsis thaliana.</title>
        <authorList>
            <person name="Salanoubat M."/>
            <person name="Lemcke K."/>
            <person name="Rieger M."/>
            <person name="Ansorge W."/>
            <person name="Unseld M."/>
            <person name="Fartmann B."/>
            <person name="Valle G."/>
            <person name="Bloecker H."/>
            <person name="Perez-Alonso M."/>
            <person name="Obermaier B."/>
            <person name="Delseny M."/>
            <person name="Boutry M."/>
            <person name="Grivell L.A."/>
            <person name="Mache R."/>
            <person name="Puigdomenech P."/>
            <person name="De Simone V."/>
            <person name="Choisne N."/>
            <person name="Artiguenave F."/>
            <person name="Robert C."/>
            <person name="Brottier P."/>
            <person name="Wincker P."/>
            <person name="Cattolico L."/>
            <person name="Weissenbach J."/>
            <person name="Saurin W."/>
            <person name="Quetier F."/>
            <person name="Schaefer M."/>
            <person name="Mueller-Auer S."/>
            <person name="Gabel C."/>
            <person name="Fuchs M."/>
            <person name="Benes V."/>
            <person name="Wurmbach E."/>
            <person name="Drzonek H."/>
            <person name="Erfle H."/>
            <person name="Jordan N."/>
            <person name="Bangert S."/>
            <person name="Wiedelmann R."/>
            <person name="Kranz H."/>
            <person name="Voss H."/>
            <person name="Holland R."/>
            <person name="Brandt P."/>
            <person name="Nyakatura G."/>
            <person name="Vezzi A."/>
            <person name="D'Angelo M."/>
            <person name="Pallavicini A."/>
            <person name="Toppo S."/>
            <person name="Simionati B."/>
            <person name="Conrad A."/>
            <person name="Hornischer K."/>
            <person name="Kauer G."/>
            <person name="Loehnert T.-H."/>
            <person name="Nordsiek G."/>
            <person name="Reichelt J."/>
            <person name="Scharfe M."/>
            <person name="Schoen O."/>
            <person name="Bargues M."/>
            <person name="Terol J."/>
            <person name="Climent J."/>
            <person name="Navarro P."/>
            <person name="Collado C."/>
            <person name="Perez-Perez A."/>
            <person name="Ottenwaelder B."/>
            <person name="Duchemin D."/>
            <person name="Cooke R."/>
            <person name="Laudie M."/>
            <person name="Berger-Llauro C."/>
            <person name="Purnelle B."/>
            <person name="Masuy D."/>
            <person name="de Haan M."/>
            <person name="Maarse A.C."/>
            <person name="Alcaraz J.-P."/>
            <person name="Cottet A."/>
            <person name="Casacuberta E."/>
            <person name="Monfort A."/>
            <person name="Argiriou A."/>
            <person name="Flores M."/>
            <person name="Liguori R."/>
            <person name="Vitale D."/>
            <person name="Mannhaupt G."/>
            <person name="Haase D."/>
            <person name="Schoof H."/>
            <person name="Rudd S."/>
            <person name="Zaccaria P."/>
            <person name="Mewes H.-W."/>
            <person name="Mayer K.F.X."/>
            <person name="Kaul S."/>
            <person name="Town C.D."/>
            <person name="Koo H.L."/>
            <person name="Tallon L.J."/>
            <person name="Jenkins J."/>
            <person name="Rooney T."/>
            <person name="Rizzo M."/>
            <person name="Walts A."/>
            <person name="Utterback T."/>
            <person name="Fujii C.Y."/>
            <person name="Shea T.P."/>
            <person name="Creasy T.H."/>
            <person name="Haas B."/>
            <person name="Maiti R."/>
            <person name="Wu D."/>
            <person name="Peterson J."/>
            <person name="Van Aken S."/>
            <person name="Pai G."/>
            <person name="Militscher J."/>
            <person name="Sellers P."/>
            <person name="Gill J.E."/>
            <person name="Feldblyum T.V."/>
            <person name="Preuss D."/>
            <person name="Lin X."/>
            <person name="Nierman W.C."/>
            <person name="Salzberg S.L."/>
            <person name="White O."/>
            <person name="Venter J.C."/>
            <person name="Fraser C.M."/>
            <person name="Kaneko T."/>
            <person name="Nakamura Y."/>
            <person name="Sato S."/>
            <person name="Kato T."/>
            <person name="Asamizu E."/>
            <person name="Sasamoto S."/>
            <person name="Kimura T."/>
            <person name="Idesawa K."/>
            <person name="Kawashima K."/>
            <person name="Kishida Y."/>
            <person name="Kiyokawa C."/>
            <person name="Kohara M."/>
            <person name="Matsumoto M."/>
            <person name="Matsuno A."/>
            <person name="Muraki A."/>
            <person name="Nakayama S."/>
            <person name="Nakazaki N."/>
            <person name="Shinpo S."/>
            <person name="Takeuchi C."/>
            <person name="Wada T."/>
            <person name="Watanabe A."/>
            <person name="Yamada M."/>
            <person name="Yasuda M."/>
            <person name="Tabata S."/>
        </authorList>
    </citation>
    <scope>NUCLEOTIDE SEQUENCE [LARGE SCALE GENOMIC DNA]</scope>
    <source>
        <strain>cv. Columbia</strain>
    </source>
</reference>
<reference key="2">
    <citation type="journal article" date="2017" name="Plant J.">
        <title>Araport11: a complete reannotation of the Arabidopsis thaliana reference genome.</title>
        <authorList>
            <person name="Cheng C.Y."/>
            <person name="Krishnakumar V."/>
            <person name="Chan A.P."/>
            <person name="Thibaud-Nissen F."/>
            <person name="Schobel S."/>
            <person name="Town C.D."/>
        </authorList>
    </citation>
    <scope>GENOME REANNOTATION</scope>
    <source>
        <strain>cv. Columbia</strain>
    </source>
</reference>
<reference key="3">
    <citation type="journal article" date="2010" name="Metallomics">
        <title>Metallochaperone-like genes in Arabidopsis thaliana.</title>
        <authorList>
            <person name="Tehseen M."/>
            <person name="Cairns N."/>
            <person name="Sherson S."/>
            <person name="Cobbett C.S."/>
        </authorList>
    </citation>
    <scope>GENE FAMILY</scope>
    <scope>NOMENCLATURE</scope>
</reference>
<reference key="4">
    <citation type="journal article" date="2013" name="FEBS J.">
        <title>Heavy metal-associated isoprenylated plant protein (HIPP): characterization of a family of proteins exclusive to plants.</title>
        <authorList>
            <person name="de Abreu-Neto J.B."/>
            <person name="Turchetto-Zolet A.C."/>
            <person name="de Oliveira L.F."/>
            <person name="Zanettini M.H."/>
            <person name="Margis-Pinheiro M."/>
        </authorList>
    </citation>
    <scope>GENE FAMILY</scope>
    <scope>NOMENCLATURE</scope>
</reference>
<gene>
    <name evidence="5 6" type="primary">HIPP08</name>
    <name evidence="8" type="ordered locus">At3g02960</name>
    <name evidence="9" type="ORF">F13E7.9</name>
</gene>
<evidence type="ECO:0000250" key="1">
    <source>
        <dbReference type="UniProtKB" id="Q9LZF1"/>
    </source>
</evidence>
<evidence type="ECO:0000250" key="2">
    <source>
        <dbReference type="UniProtKB" id="Q9SZN7"/>
    </source>
</evidence>
<evidence type="ECO:0000255" key="3">
    <source>
        <dbReference type="PROSITE-ProRule" id="PRU00280"/>
    </source>
</evidence>
<evidence type="ECO:0000256" key="4">
    <source>
        <dbReference type="SAM" id="MobiDB-lite"/>
    </source>
</evidence>
<evidence type="ECO:0000303" key="5">
    <source>
    </source>
</evidence>
<evidence type="ECO:0000303" key="6">
    <source>
    </source>
</evidence>
<evidence type="ECO:0000305" key="7"/>
<evidence type="ECO:0000312" key="8">
    <source>
        <dbReference type="Araport" id="AT3G02960"/>
    </source>
</evidence>
<evidence type="ECO:0000312" key="9">
    <source>
        <dbReference type="EMBL" id="AAF26963.1"/>
    </source>
</evidence>
<organism>
    <name type="scientific">Arabidopsis thaliana</name>
    <name type="common">Mouse-ear cress</name>
    <dbReference type="NCBI Taxonomy" id="3702"/>
    <lineage>
        <taxon>Eukaryota</taxon>
        <taxon>Viridiplantae</taxon>
        <taxon>Streptophyta</taxon>
        <taxon>Embryophyta</taxon>
        <taxon>Tracheophyta</taxon>
        <taxon>Spermatophyta</taxon>
        <taxon>Magnoliopsida</taxon>
        <taxon>eudicotyledons</taxon>
        <taxon>Gunneridae</taxon>
        <taxon>Pentapetalae</taxon>
        <taxon>rosids</taxon>
        <taxon>malvids</taxon>
        <taxon>Brassicales</taxon>
        <taxon>Brassicaceae</taxon>
        <taxon>Camelineae</taxon>
        <taxon>Arabidopsis</taxon>
    </lineage>
</organism>
<dbReference type="EMBL" id="AC018363">
    <property type="protein sequence ID" value="AAF26963.1"/>
    <property type="molecule type" value="Genomic_DNA"/>
</dbReference>
<dbReference type="EMBL" id="CP002686">
    <property type="protein sequence ID" value="AEE73885.1"/>
    <property type="molecule type" value="Genomic_DNA"/>
</dbReference>
<dbReference type="RefSeq" id="NP_186946.1">
    <property type="nucleotide sequence ID" value="NM_111166.1"/>
</dbReference>
<dbReference type="SMR" id="Q9M8T7"/>
<dbReference type="FunCoup" id="Q9M8T7">
    <property type="interactions" value="27"/>
</dbReference>
<dbReference type="PaxDb" id="3702-AT3G02960.1"/>
<dbReference type="EnsemblPlants" id="AT3G02960.1">
    <property type="protein sequence ID" value="AT3G02960.1"/>
    <property type="gene ID" value="AT3G02960"/>
</dbReference>
<dbReference type="GeneID" id="821172"/>
<dbReference type="Gramene" id="AT3G02960.1">
    <property type="protein sequence ID" value="AT3G02960.1"/>
    <property type="gene ID" value="AT3G02960"/>
</dbReference>
<dbReference type="KEGG" id="ath:AT3G02960"/>
<dbReference type="Araport" id="AT3G02960"/>
<dbReference type="TAIR" id="AT3G02960"/>
<dbReference type="eggNOG" id="KOG1603">
    <property type="taxonomic scope" value="Eukaryota"/>
</dbReference>
<dbReference type="HOGENOM" id="CLU_039886_3_1_1"/>
<dbReference type="InParanoid" id="Q9M8T7"/>
<dbReference type="OMA" id="LKMNMHC"/>
<dbReference type="PhylomeDB" id="Q9M8T7"/>
<dbReference type="PRO" id="PR:Q9M8T7"/>
<dbReference type="Proteomes" id="UP000006548">
    <property type="component" value="Chromosome 3"/>
</dbReference>
<dbReference type="ExpressionAtlas" id="Q9M8T7">
    <property type="expression patterns" value="baseline"/>
</dbReference>
<dbReference type="GO" id="GO:0046872">
    <property type="term" value="F:metal ion binding"/>
    <property type="evidence" value="ECO:0007669"/>
    <property type="project" value="UniProtKB-KW"/>
</dbReference>
<dbReference type="CDD" id="cd00371">
    <property type="entry name" value="HMA"/>
    <property type="match status" value="2"/>
</dbReference>
<dbReference type="Gene3D" id="3.30.70.100">
    <property type="match status" value="2"/>
</dbReference>
<dbReference type="InterPro" id="IPR044577">
    <property type="entry name" value="HIPP4/7/8/17/18/19"/>
</dbReference>
<dbReference type="InterPro" id="IPR006121">
    <property type="entry name" value="HMA_dom"/>
</dbReference>
<dbReference type="InterPro" id="IPR036163">
    <property type="entry name" value="HMA_dom_sf"/>
</dbReference>
<dbReference type="PANTHER" id="PTHR46195">
    <property type="entry name" value="HEAVY METAL-ASSOCIATED ISOPRENYLATED PLANT PROTEIN 7"/>
    <property type="match status" value="1"/>
</dbReference>
<dbReference type="PANTHER" id="PTHR46195:SF17">
    <property type="entry name" value="HEAVY METAL-ASSOCIATED ISOPRENYLATED PLANT PROTEIN 8"/>
    <property type="match status" value="1"/>
</dbReference>
<dbReference type="Pfam" id="PF00403">
    <property type="entry name" value="HMA"/>
    <property type="match status" value="2"/>
</dbReference>
<dbReference type="SUPFAM" id="SSF55008">
    <property type="entry name" value="HMA, heavy metal-associated domain"/>
    <property type="match status" value="2"/>
</dbReference>
<dbReference type="PROSITE" id="PS50846">
    <property type="entry name" value="HMA_2"/>
    <property type="match status" value="2"/>
</dbReference>
<proteinExistence type="inferred from homology"/>
<keyword id="KW-0449">Lipoprotein</keyword>
<keyword id="KW-0479">Metal-binding</keyword>
<keyword id="KW-0488">Methylation</keyword>
<keyword id="KW-0636">Prenylation</keyword>
<keyword id="KW-1185">Reference proteome</keyword>
<keyword id="KW-0677">Repeat</keyword>
<protein>
    <recommendedName>
        <fullName evidence="5 6">Heavy metal-associated isoprenylated plant protein 8</fullName>
        <shortName evidence="5 6">AtHIP08</shortName>
    </recommendedName>
</protein>
<sequence>MGKNKQNGESDNKSEKKNQKNGDSSVDKSDKKNQCKEIVLKVYMHCEGCASQVSHCLRGYDGVEHIKTEIGDNKVVVSGKFDDPLKILRRVQKKFSRNAEMISPKHNPKQDQKEPQQKKESAPEIKTAILRMNMHCEGCVHEIKRGIEKIKGIQSVEPDRSKSTVVVRGVMDPPKLVEKIKKKLGKHAELLSQITEKGKDNNKKNNNKKEESDGNKIFSYPPQYSSQHAYPSQIFSDENVHSCSIM</sequence>